<organism>
    <name type="scientific">Nitrobacter winogradskyi (strain ATCC 25391 / DSM 10237 / CIP 104748 / NCIMB 11846 / Nb-255)</name>
    <dbReference type="NCBI Taxonomy" id="323098"/>
    <lineage>
        <taxon>Bacteria</taxon>
        <taxon>Pseudomonadati</taxon>
        <taxon>Pseudomonadota</taxon>
        <taxon>Alphaproteobacteria</taxon>
        <taxon>Hyphomicrobiales</taxon>
        <taxon>Nitrobacteraceae</taxon>
        <taxon>Nitrobacter</taxon>
    </lineage>
</organism>
<keyword id="KW-0066">ATP synthesis</keyword>
<keyword id="KW-0997">Cell inner membrane</keyword>
<keyword id="KW-1003">Cell membrane</keyword>
<keyword id="KW-0138">CF(0)</keyword>
<keyword id="KW-0375">Hydrogen ion transport</keyword>
<keyword id="KW-0406">Ion transport</keyword>
<keyword id="KW-0472">Membrane</keyword>
<keyword id="KW-1185">Reference proteome</keyword>
<keyword id="KW-0812">Transmembrane</keyword>
<keyword id="KW-1133">Transmembrane helix</keyword>
<keyword id="KW-0813">Transport</keyword>
<dbReference type="EMBL" id="CP000115">
    <property type="protein sequence ID" value="ABA03506.1"/>
    <property type="molecule type" value="Genomic_DNA"/>
</dbReference>
<dbReference type="RefSeq" id="WP_011313572.1">
    <property type="nucleotide sequence ID" value="NC_007406.1"/>
</dbReference>
<dbReference type="SMR" id="Q3SW35"/>
<dbReference type="STRING" id="323098.Nwi_0238"/>
<dbReference type="KEGG" id="nwi:Nwi_0238"/>
<dbReference type="eggNOG" id="COG0356">
    <property type="taxonomic scope" value="Bacteria"/>
</dbReference>
<dbReference type="HOGENOM" id="CLU_041018_0_2_5"/>
<dbReference type="OrthoDB" id="9809130at2"/>
<dbReference type="Proteomes" id="UP000002531">
    <property type="component" value="Chromosome"/>
</dbReference>
<dbReference type="GO" id="GO:0005886">
    <property type="term" value="C:plasma membrane"/>
    <property type="evidence" value="ECO:0007669"/>
    <property type="project" value="UniProtKB-SubCell"/>
</dbReference>
<dbReference type="GO" id="GO:0045259">
    <property type="term" value="C:proton-transporting ATP synthase complex"/>
    <property type="evidence" value="ECO:0007669"/>
    <property type="project" value="UniProtKB-KW"/>
</dbReference>
<dbReference type="GO" id="GO:0046933">
    <property type="term" value="F:proton-transporting ATP synthase activity, rotational mechanism"/>
    <property type="evidence" value="ECO:0007669"/>
    <property type="project" value="UniProtKB-UniRule"/>
</dbReference>
<dbReference type="CDD" id="cd00310">
    <property type="entry name" value="ATP-synt_Fo_a_6"/>
    <property type="match status" value="1"/>
</dbReference>
<dbReference type="FunFam" id="1.20.120.220:FF:000003">
    <property type="entry name" value="ATP synthase subunit a"/>
    <property type="match status" value="1"/>
</dbReference>
<dbReference type="Gene3D" id="1.20.120.220">
    <property type="entry name" value="ATP synthase, F0 complex, subunit A"/>
    <property type="match status" value="1"/>
</dbReference>
<dbReference type="HAMAP" id="MF_01393">
    <property type="entry name" value="ATP_synth_a_bact"/>
    <property type="match status" value="1"/>
</dbReference>
<dbReference type="InterPro" id="IPR000568">
    <property type="entry name" value="ATP_synth_F0_asu"/>
</dbReference>
<dbReference type="InterPro" id="IPR023011">
    <property type="entry name" value="ATP_synth_F0_asu_AS"/>
</dbReference>
<dbReference type="InterPro" id="IPR045083">
    <property type="entry name" value="ATP_synth_F0_asu_bact/mt"/>
</dbReference>
<dbReference type="InterPro" id="IPR035908">
    <property type="entry name" value="F0_ATP_A_sf"/>
</dbReference>
<dbReference type="NCBIfam" id="TIGR01131">
    <property type="entry name" value="ATP_synt_6_or_A"/>
    <property type="match status" value="1"/>
</dbReference>
<dbReference type="NCBIfam" id="NF004482">
    <property type="entry name" value="PRK05815.2-4"/>
    <property type="match status" value="1"/>
</dbReference>
<dbReference type="PANTHER" id="PTHR11410">
    <property type="entry name" value="ATP SYNTHASE SUBUNIT A"/>
    <property type="match status" value="1"/>
</dbReference>
<dbReference type="PANTHER" id="PTHR11410:SF0">
    <property type="entry name" value="ATP SYNTHASE SUBUNIT A"/>
    <property type="match status" value="1"/>
</dbReference>
<dbReference type="Pfam" id="PF00119">
    <property type="entry name" value="ATP-synt_A"/>
    <property type="match status" value="1"/>
</dbReference>
<dbReference type="PRINTS" id="PR00123">
    <property type="entry name" value="ATPASEA"/>
</dbReference>
<dbReference type="SUPFAM" id="SSF81336">
    <property type="entry name" value="F1F0 ATP synthase subunit A"/>
    <property type="match status" value="1"/>
</dbReference>
<dbReference type="PROSITE" id="PS00449">
    <property type="entry name" value="ATPASE_A"/>
    <property type="match status" value="1"/>
</dbReference>
<feature type="chain" id="PRO_0000362355" description="ATP synthase subunit a">
    <location>
        <begin position="1"/>
        <end position="247"/>
    </location>
</feature>
<feature type="transmembrane region" description="Helical" evidence="1">
    <location>
        <begin position="24"/>
        <end position="44"/>
    </location>
</feature>
<feature type="transmembrane region" description="Helical" evidence="1">
    <location>
        <begin position="82"/>
        <end position="102"/>
    </location>
</feature>
<feature type="transmembrane region" description="Helical" evidence="1">
    <location>
        <begin position="112"/>
        <end position="132"/>
    </location>
</feature>
<feature type="transmembrane region" description="Helical" evidence="1">
    <location>
        <begin position="141"/>
        <end position="161"/>
    </location>
</feature>
<feature type="transmembrane region" description="Helical" evidence="1">
    <location>
        <begin position="194"/>
        <end position="214"/>
    </location>
</feature>
<feature type="transmembrane region" description="Helical" evidence="1">
    <location>
        <begin position="219"/>
        <end position="239"/>
    </location>
</feature>
<name>ATP6_NITWN</name>
<comment type="function">
    <text evidence="1">Key component of the proton channel; it plays a direct role in the translocation of protons across the membrane.</text>
</comment>
<comment type="subunit">
    <text evidence="1">F-type ATPases have 2 components, CF(1) - the catalytic core - and CF(0) - the membrane proton channel. CF(1) has five subunits: alpha(3), beta(3), gamma(1), delta(1), epsilon(1). CF(0) has three main subunits: a(1), b(2) and c(9-12). The alpha and beta chains form an alternating ring which encloses part of the gamma chain. CF(1) is attached to CF(0) by a central stalk formed by the gamma and epsilon chains, while a peripheral stalk is formed by the delta and b chains.</text>
</comment>
<comment type="subcellular location">
    <subcellularLocation>
        <location evidence="1">Cell inner membrane</location>
        <topology evidence="1">Multi-pass membrane protein</topology>
    </subcellularLocation>
</comment>
<comment type="similarity">
    <text evidence="1">Belongs to the ATPase A chain family.</text>
</comment>
<proteinExistence type="inferred from homology"/>
<accession>Q3SW35</accession>
<sequence>MMDPIHQFNIEPIFTIGHIGGQEIAFTNSSAYMFLAVALTSLLMLGTGRRLVPGRMQSIAEISYEFVADTIRTTAGKEGMKFFPFVFSIFMLVTVSNLVGIIPYTFTISSHIIVTAALAFLVFFTVLIYGFYKNGLRFFKLFVPSGIPVVILPLVVTIEVISFLSRPVSHSVRLFANMLAGHITLKVFASFVTMLGAMGIVGVFGAVLPLALVVALTALELLVAFLQAYVFTILTCIYINDAIHPGH</sequence>
<gene>
    <name evidence="1" type="primary">atpB</name>
    <name type="ordered locus">Nwi_0238</name>
</gene>
<reference key="1">
    <citation type="journal article" date="2006" name="Appl. Environ. Microbiol.">
        <title>Genome sequence of the chemolithoautotrophic nitrite-oxidizing bacterium Nitrobacter winogradskyi Nb-255.</title>
        <authorList>
            <person name="Starkenburg S.R."/>
            <person name="Chain P.S.G."/>
            <person name="Sayavedra-Soto L.A."/>
            <person name="Hauser L."/>
            <person name="Land M.L."/>
            <person name="Larimer F.W."/>
            <person name="Malfatti S.A."/>
            <person name="Klotz M.G."/>
            <person name="Bottomley P.J."/>
            <person name="Arp D.J."/>
            <person name="Hickey W.J."/>
        </authorList>
    </citation>
    <scope>NUCLEOTIDE SEQUENCE [LARGE SCALE GENOMIC DNA]</scope>
    <source>
        <strain>ATCC 25391 / DSM 10237 / CIP 104748 / NCIMB 11846 / Nb-255</strain>
    </source>
</reference>
<evidence type="ECO:0000255" key="1">
    <source>
        <dbReference type="HAMAP-Rule" id="MF_01393"/>
    </source>
</evidence>
<protein>
    <recommendedName>
        <fullName evidence="1">ATP synthase subunit a</fullName>
    </recommendedName>
    <alternativeName>
        <fullName evidence="1">ATP synthase F0 sector subunit a</fullName>
    </alternativeName>
    <alternativeName>
        <fullName evidence="1">F-ATPase subunit 6</fullName>
    </alternativeName>
</protein>